<gene>
    <name evidence="1" type="primary">lipA</name>
    <name type="ordered locus">SDY_0550</name>
</gene>
<comment type="function">
    <text evidence="1">Catalyzes the radical-mediated insertion of two sulfur atoms into the C-6 and C-8 positions of the octanoyl moiety bound to the lipoyl domains of lipoate-dependent enzymes, thereby converting the octanoylated domains into lipoylated derivatives.</text>
</comment>
<comment type="catalytic activity">
    <reaction evidence="1">
        <text>[[Fe-S] cluster scaffold protein carrying a second [4Fe-4S](2+) cluster] + N(6)-octanoyl-L-lysyl-[protein] + 2 oxidized [2Fe-2S]-[ferredoxin] + 2 S-adenosyl-L-methionine + 4 H(+) = [[Fe-S] cluster scaffold protein] + N(6)-[(R)-dihydrolipoyl]-L-lysyl-[protein] + 4 Fe(3+) + 2 hydrogen sulfide + 2 5'-deoxyadenosine + 2 L-methionine + 2 reduced [2Fe-2S]-[ferredoxin]</text>
        <dbReference type="Rhea" id="RHEA:16585"/>
        <dbReference type="Rhea" id="RHEA-COMP:9928"/>
        <dbReference type="Rhea" id="RHEA-COMP:10000"/>
        <dbReference type="Rhea" id="RHEA-COMP:10001"/>
        <dbReference type="Rhea" id="RHEA-COMP:10475"/>
        <dbReference type="Rhea" id="RHEA-COMP:14568"/>
        <dbReference type="Rhea" id="RHEA-COMP:14569"/>
        <dbReference type="ChEBI" id="CHEBI:15378"/>
        <dbReference type="ChEBI" id="CHEBI:17319"/>
        <dbReference type="ChEBI" id="CHEBI:29034"/>
        <dbReference type="ChEBI" id="CHEBI:29919"/>
        <dbReference type="ChEBI" id="CHEBI:33722"/>
        <dbReference type="ChEBI" id="CHEBI:33737"/>
        <dbReference type="ChEBI" id="CHEBI:33738"/>
        <dbReference type="ChEBI" id="CHEBI:57844"/>
        <dbReference type="ChEBI" id="CHEBI:59789"/>
        <dbReference type="ChEBI" id="CHEBI:78809"/>
        <dbReference type="ChEBI" id="CHEBI:83100"/>
        <dbReference type="EC" id="2.8.1.8"/>
    </reaction>
</comment>
<comment type="cofactor">
    <cofactor evidence="1">
        <name>[4Fe-4S] cluster</name>
        <dbReference type="ChEBI" id="CHEBI:49883"/>
    </cofactor>
    <text evidence="1">Binds 2 [4Fe-4S] clusters per subunit. One cluster is coordinated with 3 cysteines and an exchangeable S-adenosyl-L-methionine.</text>
</comment>
<comment type="pathway">
    <text evidence="1">Protein modification; protein lipoylation via endogenous pathway; protein N(6)-(lipoyl)lysine from octanoyl-[acyl-carrier-protein]: step 2/2.</text>
</comment>
<comment type="subcellular location">
    <subcellularLocation>
        <location evidence="1">Cytoplasm</location>
    </subcellularLocation>
</comment>
<comment type="similarity">
    <text evidence="1">Belongs to the radical SAM superfamily. Lipoyl synthase family.</text>
</comment>
<organism>
    <name type="scientific">Shigella dysenteriae serotype 1 (strain Sd197)</name>
    <dbReference type="NCBI Taxonomy" id="300267"/>
    <lineage>
        <taxon>Bacteria</taxon>
        <taxon>Pseudomonadati</taxon>
        <taxon>Pseudomonadota</taxon>
        <taxon>Gammaproteobacteria</taxon>
        <taxon>Enterobacterales</taxon>
        <taxon>Enterobacteriaceae</taxon>
        <taxon>Shigella</taxon>
    </lineage>
</organism>
<proteinExistence type="inferred from homology"/>
<protein>
    <recommendedName>
        <fullName evidence="1">Lipoyl synthase</fullName>
        <ecNumber evidence="1">2.8.1.8</ecNumber>
    </recommendedName>
    <alternativeName>
        <fullName evidence="1">Lip-syn</fullName>
        <shortName evidence="1">LS</shortName>
    </alternativeName>
    <alternativeName>
        <fullName evidence="1">Lipoate synthase</fullName>
    </alternativeName>
    <alternativeName>
        <fullName evidence="1">Lipoic acid synthase</fullName>
    </alternativeName>
    <alternativeName>
        <fullName evidence="1">Sulfur insertion protein LipA</fullName>
    </alternativeName>
</protein>
<keyword id="KW-0004">4Fe-4S</keyword>
<keyword id="KW-0963">Cytoplasm</keyword>
<keyword id="KW-0408">Iron</keyword>
<keyword id="KW-0411">Iron-sulfur</keyword>
<keyword id="KW-0479">Metal-binding</keyword>
<keyword id="KW-1185">Reference proteome</keyword>
<keyword id="KW-0949">S-adenosyl-L-methionine</keyword>
<keyword id="KW-0808">Transferase</keyword>
<name>LIPA_SHIDS</name>
<accession>Q32IV2</accession>
<feature type="chain" id="PRO_1000012283" description="Lipoyl synthase">
    <location>
        <begin position="1"/>
        <end position="321"/>
    </location>
</feature>
<feature type="domain" description="Radical SAM core" evidence="2">
    <location>
        <begin position="80"/>
        <end position="297"/>
    </location>
</feature>
<feature type="binding site" evidence="1">
    <location>
        <position position="68"/>
    </location>
    <ligand>
        <name>[4Fe-4S] cluster</name>
        <dbReference type="ChEBI" id="CHEBI:49883"/>
        <label>1</label>
    </ligand>
</feature>
<feature type="binding site" evidence="1">
    <location>
        <position position="73"/>
    </location>
    <ligand>
        <name>[4Fe-4S] cluster</name>
        <dbReference type="ChEBI" id="CHEBI:49883"/>
        <label>1</label>
    </ligand>
</feature>
<feature type="binding site" evidence="1">
    <location>
        <position position="79"/>
    </location>
    <ligand>
        <name>[4Fe-4S] cluster</name>
        <dbReference type="ChEBI" id="CHEBI:49883"/>
        <label>1</label>
    </ligand>
</feature>
<feature type="binding site" evidence="1">
    <location>
        <position position="94"/>
    </location>
    <ligand>
        <name>[4Fe-4S] cluster</name>
        <dbReference type="ChEBI" id="CHEBI:49883"/>
        <label>2</label>
        <note>4Fe-4S-S-AdoMet</note>
    </ligand>
</feature>
<feature type="binding site" evidence="1">
    <location>
        <position position="98"/>
    </location>
    <ligand>
        <name>[4Fe-4S] cluster</name>
        <dbReference type="ChEBI" id="CHEBI:49883"/>
        <label>2</label>
        <note>4Fe-4S-S-AdoMet</note>
    </ligand>
</feature>
<feature type="binding site" evidence="1">
    <location>
        <position position="101"/>
    </location>
    <ligand>
        <name>[4Fe-4S] cluster</name>
        <dbReference type="ChEBI" id="CHEBI:49883"/>
        <label>2</label>
        <note>4Fe-4S-S-AdoMet</note>
    </ligand>
</feature>
<feature type="binding site" evidence="1">
    <location>
        <position position="308"/>
    </location>
    <ligand>
        <name>[4Fe-4S] cluster</name>
        <dbReference type="ChEBI" id="CHEBI:49883"/>
        <label>1</label>
    </ligand>
</feature>
<evidence type="ECO:0000255" key="1">
    <source>
        <dbReference type="HAMAP-Rule" id="MF_00206"/>
    </source>
</evidence>
<evidence type="ECO:0000255" key="2">
    <source>
        <dbReference type="PROSITE-ProRule" id="PRU01266"/>
    </source>
</evidence>
<reference key="1">
    <citation type="journal article" date="2005" name="Nucleic Acids Res.">
        <title>Genome dynamics and diversity of Shigella species, the etiologic agents of bacillary dysentery.</title>
        <authorList>
            <person name="Yang F."/>
            <person name="Yang J."/>
            <person name="Zhang X."/>
            <person name="Chen L."/>
            <person name="Jiang Y."/>
            <person name="Yan Y."/>
            <person name="Tang X."/>
            <person name="Wang J."/>
            <person name="Xiong Z."/>
            <person name="Dong J."/>
            <person name="Xue Y."/>
            <person name="Zhu Y."/>
            <person name="Xu X."/>
            <person name="Sun L."/>
            <person name="Chen S."/>
            <person name="Nie H."/>
            <person name="Peng J."/>
            <person name="Xu J."/>
            <person name="Wang Y."/>
            <person name="Yuan Z."/>
            <person name="Wen Y."/>
            <person name="Yao Z."/>
            <person name="Shen Y."/>
            <person name="Qiang B."/>
            <person name="Hou Y."/>
            <person name="Yu J."/>
            <person name="Jin Q."/>
        </authorList>
    </citation>
    <scope>NUCLEOTIDE SEQUENCE [LARGE SCALE GENOMIC DNA]</scope>
    <source>
        <strain>Sd197</strain>
    </source>
</reference>
<sequence>MSKPIVMERGVKYRDADKMALIPVKNVATEREALLRKPEWMKIKLPADSTRIQGIKAAMRKNGLHSVCEEASCPNLAECFNHGTATFMILGAICTRRCPFCDVAHGRPVAPDANEPVKLAQTIADMALRYVVITSVDRDDLRDGGAQHFADCITAIREKSPQIKIETLVPDFRGRMDRALDILTATPPDVFNHNLENVPRIYRQVRPGADYNWSLKLLERFKEAHPEIPTKSGLMVGLGETNEEIIEVMRDLRRHGVTMLTLGQYLQPSRHHLPVQRYVSPDEFDEMKAEALAMGFTHAACGPFVRSSYHADLQAKGMEVK</sequence>
<dbReference type="EC" id="2.8.1.8" evidence="1"/>
<dbReference type="EMBL" id="CP000034">
    <property type="protein sequence ID" value="ABB60755.1"/>
    <property type="molecule type" value="Genomic_DNA"/>
</dbReference>
<dbReference type="RefSeq" id="WP_000042632.1">
    <property type="nucleotide sequence ID" value="NC_007606.1"/>
</dbReference>
<dbReference type="RefSeq" id="YP_402244.1">
    <property type="nucleotide sequence ID" value="NC_007606.1"/>
</dbReference>
<dbReference type="SMR" id="Q32IV2"/>
<dbReference type="STRING" id="300267.SDY_0550"/>
<dbReference type="EnsemblBacteria" id="ABB60755">
    <property type="protein sequence ID" value="ABB60755"/>
    <property type="gene ID" value="SDY_0550"/>
</dbReference>
<dbReference type="GeneID" id="93776854"/>
<dbReference type="KEGG" id="sdy:SDY_0550"/>
<dbReference type="PATRIC" id="fig|300267.13.peg.651"/>
<dbReference type="HOGENOM" id="CLU_033144_2_1_6"/>
<dbReference type="UniPathway" id="UPA00538">
    <property type="reaction ID" value="UER00593"/>
</dbReference>
<dbReference type="Proteomes" id="UP000002716">
    <property type="component" value="Chromosome"/>
</dbReference>
<dbReference type="GO" id="GO:0005737">
    <property type="term" value="C:cytoplasm"/>
    <property type="evidence" value="ECO:0007669"/>
    <property type="project" value="UniProtKB-SubCell"/>
</dbReference>
<dbReference type="GO" id="GO:0051539">
    <property type="term" value="F:4 iron, 4 sulfur cluster binding"/>
    <property type="evidence" value="ECO:0007669"/>
    <property type="project" value="UniProtKB-UniRule"/>
</dbReference>
<dbReference type="GO" id="GO:0016992">
    <property type="term" value="F:lipoate synthase activity"/>
    <property type="evidence" value="ECO:0007669"/>
    <property type="project" value="UniProtKB-UniRule"/>
</dbReference>
<dbReference type="GO" id="GO:0046872">
    <property type="term" value="F:metal ion binding"/>
    <property type="evidence" value="ECO:0007669"/>
    <property type="project" value="UniProtKB-KW"/>
</dbReference>
<dbReference type="CDD" id="cd01335">
    <property type="entry name" value="Radical_SAM"/>
    <property type="match status" value="1"/>
</dbReference>
<dbReference type="FunFam" id="3.20.20.70:FF:000023">
    <property type="entry name" value="Lipoyl synthase"/>
    <property type="match status" value="1"/>
</dbReference>
<dbReference type="Gene3D" id="3.20.20.70">
    <property type="entry name" value="Aldolase class I"/>
    <property type="match status" value="1"/>
</dbReference>
<dbReference type="HAMAP" id="MF_00206">
    <property type="entry name" value="Lipoyl_synth"/>
    <property type="match status" value="1"/>
</dbReference>
<dbReference type="InterPro" id="IPR013785">
    <property type="entry name" value="Aldolase_TIM"/>
</dbReference>
<dbReference type="InterPro" id="IPR006638">
    <property type="entry name" value="Elp3/MiaA/NifB-like_rSAM"/>
</dbReference>
<dbReference type="InterPro" id="IPR031691">
    <property type="entry name" value="LIAS_N"/>
</dbReference>
<dbReference type="InterPro" id="IPR003698">
    <property type="entry name" value="Lipoyl_synth"/>
</dbReference>
<dbReference type="InterPro" id="IPR007197">
    <property type="entry name" value="rSAM"/>
</dbReference>
<dbReference type="NCBIfam" id="TIGR00510">
    <property type="entry name" value="lipA"/>
    <property type="match status" value="1"/>
</dbReference>
<dbReference type="NCBIfam" id="NF004019">
    <property type="entry name" value="PRK05481.1"/>
    <property type="match status" value="1"/>
</dbReference>
<dbReference type="NCBIfam" id="NF009544">
    <property type="entry name" value="PRK12928.1"/>
    <property type="match status" value="1"/>
</dbReference>
<dbReference type="PANTHER" id="PTHR10949">
    <property type="entry name" value="LIPOYL SYNTHASE"/>
    <property type="match status" value="1"/>
</dbReference>
<dbReference type="PANTHER" id="PTHR10949:SF0">
    <property type="entry name" value="LIPOYL SYNTHASE, MITOCHONDRIAL"/>
    <property type="match status" value="1"/>
</dbReference>
<dbReference type="Pfam" id="PF16881">
    <property type="entry name" value="LIAS_N"/>
    <property type="match status" value="1"/>
</dbReference>
<dbReference type="Pfam" id="PF04055">
    <property type="entry name" value="Radical_SAM"/>
    <property type="match status" value="1"/>
</dbReference>
<dbReference type="PIRSF" id="PIRSF005963">
    <property type="entry name" value="Lipoyl_synth"/>
    <property type="match status" value="1"/>
</dbReference>
<dbReference type="SFLD" id="SFLDF00271">
    <property type="entry name" value="lipoyl_synthase"/>
    <property type="match status" value="1"/>
</dbReference>
<dbReference type="SFLD" id="SFLDG01058">
    <property type="entry name" value="lipoyl_synthase_like"/>
    <property type="match status" value="1"/>
</dbReference>
<dbReference type="SMART" id="SM00729">
    <property type="entry name" value="Elp3"/>
    <property type="match status" value="1"/>
</dbReference>
<dbReference type="SUPFAM" id="SSF102114">
    <property type="entry name" value="Radical SAM enzymes"/>
    <property type="match status" value="1"/>
</dbReference>
<dbReference type="PROSITE" id="PS51918">
    <property type="entry name" value="RADICAL_SAM"/>
    <property type="match status" value="1"/>
</dbReference>